<evidence type="ECO:0000250" key="1"/>
<evidence type="ECO:0000256" key="2">
    <source>
        <dbReference type="SAM" id="MobiDB-lite"/>
    </source>
</evidence>
<evidence type="ECO:0000305" key="3"/>
<comment type="subcellular location">
    <subcellularLocation>
        <location evidence="1">Cytoplasm</location>
    </subcellularLocation>
</comment>
<comment type="similarity">
    <text evidence="3">Belongs to the STB3 family.</text>
</comment>
<reference key="1">
    <citation type="journal article" date="2004" name="Science">
        <title>The Ashbya gossypii genome as a tool for mapping the ancient Saccharomyces cerevisiae genome.</title>
        <authorList>
            <person name="Dietrich F.S."/>
            <person name="Voegeli S."/>
            <person name="Brachat S."/>
            <person name="Lerch A."/>
            <person name="Gates K."/>
            <person name="Steiner S."/>
            <person name="Mohr C."/>
            <person name="Poehlmann R."/>
            <person name="Luedi P."/>
            <person name="Choi S."/>
            <person name="Wing R.A."/>
            <person name="Flavier A."/>
            <person name="Gaffney T.D."/>
            <person name="Philippsen P."/>
        </authorList>
    </citation>
    <scope>NUCLEOTIDE SEQUENCE [LARGE SCALE GENOMIC DNA]</scope>
    <source>
        <strain>ATCC 10895 / CBS 109.51 / FGSC 9923 / NRRL Y-1056</strain>
    </source>
</reference>
<reference key="2">
    <citation type="journal article" date="2013" name="G3 (Bethesda)">
        <title>Genomes of Ashbya fungi isolated from insects reveal four mating-type loci, numerous translocations, lack of transposons, and distinct gene duplications.</title>
        <authorList>
            <person name="Dietrich F.S."/>
            <person name="Voegeli S."/>
            <person name="Kuo S."/>
            <person name="Philippsen P."/>
        </authorList>
    </citation>
    <scope>GENOME REANNOTATION</scope>
    <source>
        <strain>ATCC 10895 / CBS 109.51 / FGSC 9923 / NRRL Y-1056</strain>
    </source>
</reference>
<gene>
    <name type="primary">STB3</name>
    <name type="ordered locus">AGL152C</name>
</gene>
<name>STB3_EREGS</name>
<proteinExistence type="inferred from homology"/>
<feature type="chain" id="PRO_0000072253" description="Protein STB3">
    <location>
        <begin position="1"/>
        <end position="511"/>
    </location>
</feature>
<feature type="region of interest" description="Disordered" evidence="2">
    <location>
        <begin position="1"/>
        <end position="82"/>
    </location>
</feature>
<feature type="region of interest" description="Disordered" evidence="2">
    <location>
        <begin position="206"/>
        <end position="227"/>
    </location>
</feature>
<feature type="region of interest" description="Disordered" evidence="2">
    <location>
        <begin position="298"/>
        <end position="501"/>
    </location>
</feature>
<feature type="compositionally biased region" description="Basic residues" evidence="2">
    <location>
        <begin position="9"/>
        <end position="20"/>
    </location>
</feature>
<feature type="compositionally biased region" description="Gly residues" evidence="2">
    <location>
        <begin position="64"/>
        <end position="82"/>
    </location>
</feature>
<feature type="compositionally biased region" description="Basic and acidic residues" evidence="2">
    <location>
        <begin position="380"/>
        <end position="393"/>
    </location>
</feature>
<feature type="compositionally biased region" description="Polar residues" evidence="2">
    <location>
        <begin position="394"/>
        <end position="408"/>
    </location>
</feature>
<feature type="compositionally biased region" description="Basic and acidic residues" evidence="2">
    <location>
        <begin position="417"/>
        <end position="429"/>
    </location>
</feature>
<feature type="compositionally biased region" description="Low complexity" evidence="2">
    <location>
        <begin position="446"/>
        <end position="471"/>
    </location>
</feature>
<protein>
    <recommendedName>
        <fullName>Protein STB3</fullName>
    </recommendedName>
</protein>
<sequence length="511" mass="54830">MASVLLLPHQRRKHRQKRARTASYRKPMSQGSSPSPAMEVDGPEFPGKTGGQTIAEMGEERSGAGTGNTGTGGQSSVSGAGGKAGALNTAKLVLSHKPISTSSPEAMAAAQQVTPQKLAQLLLAKGPLAIRFITQALTEEIPSFKDLSASKQRRLIMGALEAGDQENSVVFAKIGWGQWSARHVKPHLFIKERELTNVANSKVKDAGVHEARRSSSNAKKGGKSGSFLNELKRPMLAAPTASIYIDENALASDDDEEDDEEDEHDMLNYENLKRRQPSVVAVEPPELSDQQEVLFRARLRAPNGGSRRRSTSKVRSVSVSKPGAHRAPPAAGDAVEGPLRRLSPSQADRKSTIDIATPEEPPHDELLSANSVAKTRRAAARRDSWLSRSKESSIRSTLLSHSNYNIVSPPSHAQPPADHHPLGREADHSDTDEEDWASIGAPALRNNSMPSNLSSSSSHHGNSASASNAHSEQGSPHARPLNYAIPNSIPPRQHSPPDAEDAAFLLMSLKS</sequence>
<organism>
    <name type="scientific">Eremothecium gossypii (strain ATCC 10895 / CBS 109.51 / FGSC 9923 / NRRL Y-1056)</name>
    <name type="common">Yeast</name>
    <name type="synonym">Ashbya gossypii</name>
    <dbReference type="NCBI Taxonomy" id="284811"/>
    <lineage>
        <taxon>Eukaryota</taxon>
        <taxon>Fungi</taxon>
        <taxon>Dikarya</taxon>
        <taxon>Ascomycota</taxon>
        <taxon>Saccharomycotina</taxon>
        <taxon>Saccharomycetes</taxon>
        <taxon>Saccharomycetales</taxon>
        <taxon>Saccharomycetaceae</taxon>
        <taxon>Eremothecium</taxon>
    </lineage>
</organism>
<keyword id="KW-0963">Cytoplasm</keyword>
<keyword id="KW-1185">Reference proteome</keyword>
<dbReference type="EMBL" id="AE016820">
    <property type="protein sequence ID" value="AAS54339.1"/>
    <property type="molecule type" value="Genomic_DNA"/>
</dbReference>
<dbReference type="RefSeq" id="NP_986515.1">
    <property type="nucleotide sequence ID" value="NM_211577.1"/>
</dbReference>
<dbReference type="FunCoup" id="Q750U1">
    <property type="interactions" value="79"/>
</dbReference>
<dbReference type="STRING" id="284811.Q750U1"/>
<dbReference type="EnsemblFungi" id="AAS54339">
    <property type="protein sequence ID" value="AAS54339"/>
    <property type="gene ID" value="AGOS_AGL152C"/>
</dbReference>
<dbReference type="GeneID" id="4622808"/>
<dbReference type="KEGG" id="ago:AGOS_AGL152C"/>
<dbReference type="eggNOG" id="ENOG502QW7S">
    <property type="taxonomic scope" value="Eukaryota"/>
</dbReference>
<dbReference type="HOGENOM" id="CLU_039968_0_0_1"/>
<dbReference type="InParanoid" id="Q750U1"/>
<dbReference type="OMA" id="FAKIGWG"/>
<dbReference type="OrthoDB" id="5391991at2759"/>
<dbReference type="Proteomes" id="UP000000591">
    <property type="component" value="Chromosome VII"/>
</dbReference>
<dbReference type="GO" id="GO:0005737">
    <property type="term" value="C:cytoplasm"/>
    <property type="evidence" value="ECO:0007669"/>
    <property type="project" value="UniProtKB-SubCell"/>
</dbReference>
<dbReference type="GO" id="GO:0005634">
    <property type="term" value="C:nucleus"/>
    <property type="evidence" value="ECO:0000318"/>
    <property type="project" value="GO_Central"/>
</dbReference>
<dbReference type="GO" id="GO:0001228">
    <property type="term" value="F:DNA-binding transcription activator activity, RNA polymerase II-specific"/>
    <property type="evidence" value="ECO:0007669"/>
    <property type="project" value="EnsemblFungi"/>
</dbReference>
<dbReference type="GO" id="GO:0043565">
    <property type="term" value="F:sequence-specific DNA binding"/>
    <property type="evidence" value="ECO:0000318"/>
    <property type="project" value="GO_Central"/>
</dbReference>
<dbReference type="GO" id="GO:0000976">
    <property type="term" value="F:transcription cis-regulatory region binding"/>
    <property type="evidence" value="ECO:0007669"/>
    <property type="project" value="EnsemblFungi"/>
</dbReference>
<dbReference type="GO" id="GO:0071333">
    <property type="term" value="P:cellular response to glucose stimulus"/>
    <property type="evidence" value="ECO:0007669"/>
    <property type="project" value="EnsemblFungi"/>
</dbReference>
<dbReference type="InterPro" id="IPR018818">
    <property type="entry name" value="Stb3"/>
</dbReference>
<dbReference type="PANTHER" id="PTHR28164">
    <property type="entry name" value="PROTEIN STB3"/>
    <property type="match status" value="1"/>
</dbReference>
<dbReference type="PANTHER" id="PTHR28164:SF1">
    <property type="entry name" value="PROTEIN STB3"/>
    <property type="match status" value="1"/>
</dbReference>
<dbReference type="Pfam" id="PF10330">
    <property type="entry name" value="Stb3"/>
    <property type="match status" value="1"/>
</dbReference>
<accession>Q750U1</accession>